<reference key="1">
    <citation type="journal article" date="2000" name="Nature">
        <title>Sequence and analysis of chromosome 1 of the plant Arabidopsis thaliana.</title>
        <authorList>
            <person name="Theologis A."/>
            <person name="Ecker J.R."/>
            <person name="Palm C.J."/>
            <person name="Federspiel N.A."/>
            <person name="Kaul S."/>
            <person name="White O."/>
            <person name="Alonso J."/>
            <person name="Altafi H."/>
            <person name="Araujo R."/>
            <person name="Bowman C.L."/>
            <person name="Brooks S.Y."/>
            <person name="Buehler E."/>
            <person name="Chan A."/>
            <person name="Chao Q."/>
            <person name="Chen H."/>
            <person name="Cheuk R.F."/>
            <person name="Chin C.W."/>
            <person name="Chung M.K."/>
            <person name="Conn L."/>
            <person name="Conway A.B."/>
            <person name="Conway A.R."/>
            <person name="Creasy T.H."/>
            <person name="Dewar K."/>
            <person name="Dunn P."/>
            <person name="Etgu P."/>
            <person name="Feldblyum T.V."/>
            <person name="Feng J.-D."/>
            <person name="Fong B."/>
            <person name="Fujii C.Y."/>
            <person name="Gill J.E."/>
            <person name="Goldsmith A.D."/>
            <person name="Haas B."/>
            <person name="Hansen N.F."/>
            <person name="Hughes B."/>
            <person name="Huizar L."/>
            <person name="Hunter J.L."/>
            <person name="Jenkins J."/>
            <person name="Johnson-Hopson C."/>
            <person name="Khan S."/>
            <person name="Khaykin E."/>
            <person name="Kim C.J."/>
            <person name="Koo H.L."/>
            <person name="Kremenetskaia I."/>
            <person name="Kurtz D.B."/>
            <person name="Kwan A."/>
            <person name="Lam B."/>
            <person name="Langin-Hooper S."/>
            <person name="Lee A."/>
            <person name="Lee J.M."/>
            <person name="Lenz C.A."/>
            <person name="Li J.H."/>
            <person name="Li Y.-P."/>
            <person name="Lin X."/>
            <person name="Liu S.X."/>
            <person name="Liu Z.A."/>
            <person name="Luros J.S."/>
            <person name="Maiti R."/>
            <person name="Marziali A."/>
            <person name="Militscher J."/>
            <person name="Miranda M."/>
            <person name="Nguyen M."/>
            <person name="Nierman W.C."/>
            <person name="Osborne B.I."/>
            <person name="Pai G."/>
            <person name="Peterson J."/>
            <person name="Pham P.K."/>
            <person name="Rizzo M."/>
            <person name="Rooney T."/>
            <person name="Rowley D."/>
            <person name="Sakano H."/>
            <person name="Salzberg S.L."/>
            <person name="Schwartz J.R."/>
            <person name="Shinn P."/>
            <person name="Southwick A.M."/>
            <person name="Sun H."/>
            <person name="Tallon L.J."/>
            <person name="Tambunga G."/>
            <person name="Toriumi M.J."/>
            <person name="Town C.D."/>
            <person name="Utterback T."/>
            <person name="Van Aken S."/>
            <person name="Vaysberg M."/>
            <person name="Vysotskaia V.S."/>
            <person name="Walker M."/>
            <person name="Wu D."/>
            <person name="Yu G."/>
            <person name="Fraser C.M."/>
            <person name="Venter J.C."/>
            <person name="Davis R.W."/>
        </authorList>
    </citation>
    <scope>NUCLEOTIDE SEQUENCE [LARGE SCALE GENOMIC DNA]</scope>
    <source>
        <strain>cv. Columbia</strain>
    </source>
</reference>
<reference key="2">
    <citation type="journal article" date="2017" name="Plant J.">
        <title>Araport11: a complete reannotation of the Arabidopsis thaliana reference genome.</title>
        <authorList>
            <person name="Cheng C.Y."/>
            <person name="Krishnakumar V."/>
            <person name="Chan A.P."/>
            <person name="Thibaud-Nissen F."/>
            <person name="Schobel S."/>
            <person name="Town C.D."/>
        </authorList>
    </citation>
    <scope>GENOME REANNOTATION</scope>
    <source>
        <strain>cv. Columbia</strain>
    </source>
</reference>
<reference key="3">
    <citation type="journal article" date="2003" name="Science">
        <title>Empirical analysis of transcriptional activity in the Arabidopsis genome.</title>
        <authorList>
            <person name="Yamada K."/>
            <person name="Lim J."/>
            <person name="Dale J.M."/>
            <person name="Chen H."/>
            <person name="Shinn P."/>
            <person name="Palm C.J."/>
            <person name="Southwick A.M."/>
            <person name="Wu H.C."/>
            <person name="Kim C.J."/>
            <person name="Nguyen M."/>
            <person name="Pham P.K."/>
            <person name="Cheuk R.F."/>
            <person name="Karlin-Newmann G."/>
            <person name="Liu S.X."/>
            <person name="Lam B."/>
            <person name="Sakano H."/>
            <person name="Wu T."/>
            <person name="Yu G."/>
            <person name="Miranda M."/>
            <person name="Quach H.L."/>
            <person name="Tripp M."/>
            <person name="Chang C.H."/>
            <person name="Lee J.M."/>
            <person name="Toriumi M.J."/>
            <person name="Chan M.M."/>
            <person name="Tang C.C."/>
            <person name="Onodera C.S."/>
            <person name="Deng J.M."/>
            <person name="Akiyama K."/>
            <person name="Ansari Y."/>
            <person name="Arakawa T."/>
            <person name="Banh J."/>
            <person name="Banno F."/>
            <person name="Bowser L."/>
            <person name="Brooks S.Y."/>
            <person name="Carninci P."/>
            <person name="Chao Q."/>
            <person name="Choy N."/>
            <person name="Enju A."/>
            <person name="Goldsmith A.D."/>
            <person name="Gurjal M."/>
            <person name="Hansen N.F."/>
            <person name="Hayashizaki Y."/>
            <person name="Johnson-Hopson C."/>
            <person name="Hsuan V.W."/>
            <person name="Iida K."/>
            <person name="Karnes M."/>
            <person name="Khan S."/>
            <person name="Koesema E."/>
            <person name="Ishida J."/>
            <person name="Jiang P.X."/>
            <person name="Jones T."/>
            <person name="Kawai J."/>
            <person name="Kamiya A."/>
            <person name="Meyers C."/>
            <person name="Nakajima M."/>
            <person name="Narusaka M."/>
            <person name="Seki M."/>
            <person name="Sakurai T."/>
            <person name="Satou M."/>
            <person name="Tamse R."/>
            <person name="Vaysberg M."/>
            <person name="Wallender E.K."/>
            <person name="Wong C."/>
            <person name="Yamamura Y."/>
            <person name="Yuan S."/>
            <person name="Shinozaki K."/>
            <person name="Davis R.W."/>
            <person name="Theologis A."/>
            <person name="Ecker J.R."/>
        </authorList>
    </citation>
    <scope>NUCLEOTIDE SEQUENCE [LARGE SCALE MRNA]</scope>
    <source>
        <strain>cv. Columbia</strain>
    </source>
</reference>
<reference key="4">
    <citation type="journal article" date="2005" name="Plant Cell Environ.">
        <title>Signalling and cell death in ozone-exposed plants.</title>
        <authorList>
            <person name="Kangasjaervi J."/>
            <person name="Jaspers P."/>
            <person name="Kollist H."/>
        </authorList>
    </citation>
    <scope>FUNCTION</scope>
    <scope>DISRUPTION PHENOTYPE</scope>
</reference>
<reference key="5">
    <citation type="journal article" date="2008" name="Nature">
        <title>CO2 regulator SLAC1 and its homologues are essential for anion homeostasis in plant cells.</title>
        <authorList>
            <person name="Negi J."/>
            <person name="Matsuda O."/>
            <person name="Nagasawa T."/>
            <person name="Oba Y."/>
            <person name="Takahashi H."/>
            <person name="Kawai-Yamada M."/>
            <person name="Uchimiya H."/>
            <person name="Hashimoto M."/>
            <person name="Iba K."/>
        </authorList>
    </citation>
    <scope>FUNCTION</scope>
    <scope>DISRUPTION PHENOTYPE</scope>
    <scope>MUTAGENESIS OF GLY-194</scope>
    <scope>SUBCELLULAR LOCATION</scope>
    <scope>TISSUE SPECIFICITY</scope>
    <scope>GENE FAMILY</scope>
    <scope>NOMENCLATURE</scope>
    <source>
        <strain>cv. Columbia</strain>
    </source>
</reference>
<reference key="6">
    <citation type="journal article" date="2008" name="Nature">
        <title>SLAC1 is required for plant guard cell S-type anion channel function in stomatal signalling.</title>
        <authorList>
            <person name="Vahisalu T."/>
            <person name="Kollist H."/>
            <person name="Wang Y.-F."/>
            <person name="Nishimura N."/>
            <person name="Chan W.-Y."/>
            <person name="Valerio G."/>
            <person name="Lamminmaeki A."/>
            <person name="Brosche M."/>
            <person name="Moldau H."/>
            <person name="Desikan R."/>
            <person name="Schroeder J.I."/>
            <person name="Kangasjaervi J."/>
        </authorList>
    </citation>
    <scope>FUNCTION</scope>
    <scope>DISRUPTION PHENOTYPE</scope>
    <scope>SUBCELLULAR LOCATION</scope>
    <scope>MUTAGENESIS OF SER-456</scope>
    <scope>TISSUE SPECIFICITY</scope>
</reference>
<reference key="7">
    <citation type="journal article" date="2008" name="Plant Cell Physiol.">
        <title>Disruption of a gene encoding C4-dicarboxylate transporter-like protein increases ozone sensitivity through deregulation of the stomatal response in Arabidopsis thaliana.</title>
        <authorList>
            <person name="Saji S."/>
            <person name="Bathula S."/>
            <person name="Kubo A."/>
            <person name="Tamaoki M."/>
            <person name="Kanna M."/>
            <person name="Aono M."/>
            <person name="Nakajima N."/>
            <person name="Nakaji T."/>
            <person name="Takeda T."/>
            <person name="Asayama M."/>
            <person name="Saji H."/>
        </authorList>
    </citation>
    <scope>FUNCTION</scope>
    <scope>DISRUPTION PHENOTYPE</scope>
    <source>
        <strain>cv. Columbia GL1</strain>
    </source>
</reference>
<reference key="8">
    <citation type="journal article" date="2009" name="J. Exp. Bot.">
        <title>The guard cell as a single-cell model towards understanding drought tolerance and abscisic acid action.</title>
        <authorList>
            <person name="Sirichandra C."/>
            <person name="Wasilewska A."/>
            <person name="Vlad F."/>
            <person name="Valon C."/>
            <person name="Leung J."/>
        </authorList>
    </citation>
    <scope>REVIEW</scope>
</reference>
<reference key="9">
    <citation type="journal article" date="2009" name="Proc. Natl. Acad. Sci. U.S.A.">
        <title>A protein kinase-phosphatase pair interacts with an ion channel to regulate ABA signaling in plant guard cells.</title>
        <authorList>
            <person name="Lee S.C."/>
            <person name="Lan W."/>
            <person name="Buchanan B.B."/>
            <person name="Luan S."/>
        </authorList>
    </citation>
    <scope>FUNCTION</scope>
    <scope>INDUCTION</scope>
    <scope>PHOSPHORYLATION</scope>
    <scope>INTERACTION WITH SRK2E/OST1 AND PP2CA</scope>
    <scope>SUBCELLULAR LOCATION</scope>
</reference>
<reference key="10">
    <citation type="journal article" date="2009" name="Proc. Natl. Acad. Sci. U.S.A.">
        <title>Activity of guard cell anion channel SLAC1 is controlled by drought-stress signaling kinase-phosphatase pair.</title>
        <authorList>
            <person name="Geiger D."/>
            <person name="Scherzer S."/>
            <person name="Mumm P."/>
            <person name="Stange A."/>
            <person name="Marten I."/>
            <person name="Bauer H."/>
            <person name="Ache P."/>
            <person name="Matschi S."/>
            <person name="Liese A."/>
            <person name="Al-Rasheid K.A.S."/>
            <person name="Romeis T."/>
            <person name="Hedrich R."/>
        </authorList>
    </citation>
    <scope>FUNCTION</scope>
    <scope>DISRUPTION PHENOTYPE</scope>
    <scope>MUTAGENESIS OF GLY-194</scope>
    <scope>SUBCELLULAR LOCATION</scope>
    <scope>TISSUE SPECIFICITY</scope>
    <scope>INTERACTION WITH SRK2E/OST1</scope>
</reference>
<reference key="11">
    <citation type="journal article" date="2010" name="Nature">
        <title>Homologue structure of the SLAC1 anion channel for closing stomata in leaves.</title>
        <authorList>
            <person name="Chen Y.-H."/>
            <person name="Hu L."/>
            <person name="Punta M."/>
            <person name="Bruni R."/>
            <person name="Hillerish B."/>
            <person name="Kloss B."/>
            <person name="Rost B."/>
            <person name="Love J."/>
            <person name="Siegelbaum S.A."/>
            <person name="Hendrickson W.A."/>
        </authorList>
    </citation>
    <scope>SUBUNIT</scope>
    <scope>MEMBRANE TOPOLOGY</scope>
    <scope>GATING SITE</scope>
    <scope>MUTAGENESIS OF GLY-194; PHE-450 AND SER-456</scope>
</reference>
<reference key="12">
    <citation type="journal article" date="2010" name="Plant J.">
        <title>Ozone-triggered rapid stomatal response involves the production of reactive oxygen species, and is controlled by SLAC1 and OST1.</title>
        <authorList>
            <person name="Vahisalu T."/>
            <person name="Puzorjova I."/>
            <person name="Brosche M."/>
            <person name="Valk E."/>
            <person name="Lepiku M."/>
            <person name="Moldau H."/>
            <person name="Pechter P."/>
            <person name="Wang Y.-S."/>
            <person name="Lindgren O."/>
            <person name="Salojaervi J."/>
            <person name="Loog M."/>
            <person name="Kangasjaervi J."/>
            <person name="Kollist H."/>
        </authorList>
    </citation>
    <scope>FUNCTION</scope>
    <scope>DISRUPTION PHENOTYPE</scope>
    <scope>PHOSPHORYLATION AT SER-59; SER-86; SER-113; SER-120 AND SER-146</scope>
    <scope>PHOSPHORYLATION BY SRK2E/OST1</scope>
    <scope>MUTAGENESIS OF SER-120 AND SER-146</scope>
    <scope>IDENTIFICATION BY MASS SPECTROMETRY</scope>
    <source>
        <strain>cv. Columbia</strain>
    </source>
</reference>
<reference key="13">
    <citation type="journal article" date="2010" name="Plant J.">
        <title>Stomatal action directly feeds back on leaf turgor: new insights into the regulation of the plant water status from non-invasive pressure probe measurements.</title>
        <authorList>
            <person name="Ache P."/>
            <person name="Bauer H."/>
            <person name="Kollist H."/>
            <person name="Al-Rasheid K.A.S."/>
            <person name="Lautner S."/>
            <person name="Hartung W."/>
            <person name="Hedrich R."/>
        </authorList>
    </citation>
    <scope>FUNCTION</scope>
    <scope>DISRUPTION PHENOTYPE</scope>
    <source>
        <strain>cv. Columbia</strain>
    </source>
</reference>
<reference key="14">
    <citation type="journal article" date="2010" name="Proc. Natl. Acad. Sci. U.S.A.">
        <title>Guard cell anion channel SLAC1 is regulated by CDPK protein kinases with distinct Ca2+ affinities.</title>
        <authorList>
            <person name="Geiger D."/>
            <person name="Scherzer S."/>
            <person name="Mumm P."/>
            <person name="Marten I."/>
            <person name="Ache P."/>
            <person name="Matschi S."/>
            <person name="Liese A."/>
            <person name="Wellmann C."/>
            <person name="Al-Rasheid K.A.S."/>
            <person name="Grill E."/>
            <person name="Romeis T."/>
            <person name="Hedrich R."/>
        </authorList>
    </citation>
    <scope>INTERACTION WITH CPK6; CPK21 AND CPK23</scope>
    <scope>PHOSPHORYLATION BY CPK21 AND CPK23</scope>
</reference>
<reference key="15">
    <citation type="journal article" date="2012" name="Plant Cell">
        <title>A plasma membrane receptor kinase, GHR1, mediates abscisic acid- and hydrogen peroxide-regulated stomatal movement in Arabidopsis.</title>
        <authorList>
            <person name="Hua D."/>
            <person name="Wang C."/>
            <person name="He J."/>
            <person name="Liao H."/>
            <person name="Duan Y."/>
            <person name="Zhu Z."/>
            <person name="Guo Y."/>
            <person name="Chen Z."/>
            <person name="Gong Z."/>
        </authorList>
    </citation>
    <scope>INTERACTION WITH GHR1</scope>
    <scope>ACTIVITY REGULATION</scope>
    <scope>PHOSPHORYLATION</scope>
</reference>
<reference key="16">
    <citation type="journal article" date="2016" name="Plant Cell">
        <title>S-type anion channels SLAC1 and SLAH3 function as essential negative regulators of inward K+ channels and stomatal opening in Arabidopsis.</title>
        <authorList>
            <person name="Zhang A."/>
            <person name="Ren H.M."/>
            <person name="Tan Y.Q."/>
            <person name="Qi G.N."/>
            <person name="Yao F.Y."/>
            <person name="Wu G.L."/>
            <person name="Yang L.W."/>
            <person name="Hussain J."/>
            <person name="Sun S.J."/>
            <person name="Wang Y.F."/>
        </authorList>
    </citation>
    <scope>FUNCTION</scope>
    <scope>INTERACTION WITH KAT1; KAT2; KAT3/KC1 AND AKT2</scope>
    <scope>INDUCTION BY DROUGHT STRESS</scope>
</reference>
<reference key="17">
    <citation type="journal article" date="2016" name="Plant Cell">
        <title>A dominant mutation in the HT1 kinase uncovers roles of MAP kinases and GHR1 in CO2-induced stomatal closure.</title>
        <authorList>
            <person name="Horak H."/>
            <person name="Sierla M."/>
            <person name="Toldsepp K."/>
            <person name="Wang C."/>
            <person name="Wang Y.-S."/>
            <person name="Nuhkat M."/>
            <person name="Valk E."/>
            <person name="Pechter P."/>
            <person name="Merilo E."/>
            <person name="Salojaervi J."/>
            <person name="Overmyer K."/>
            <person name="Loog M."/>
            <person name="Brosche M."/>
            <person name="Schroeder J.I."/>
            <person name="Kangasjaervi J."/>
            <person name="Kollist H."/>
        </authorList>
    </citation>
    <scope>ACTIVITY REGULATION</scope>
    <scope>PHOSPHORYLATION</scope>
    <source>
        <strain>cv. Columbia</strain>
    </source>
</reference>
<reference key="18">
    <citation type="journal article" date="2018" name="Plant Cell">
        <title>The receptor-like pseudokinase GHR1 is required for stomatal closure.</title>
        <authorList>
            <person name="Sierla M."/>
            <person name="Horak H."/>
            <person name="Overmyer K."/>
            <person name="Waszczak C."/>
            <person name="Yarmolinsky D."/>
            <person name="Maierhofer T."/>
            <person name="Vainonen J.P."/>
            <person name="Denessiouk K."/>
            <person name="Salojaervi J."/>
            <person name="Laanemets K."/>
            <person name="Toldsepp K."/>
            <person name="Vahisalu T."/>
            <person name="Gauthier A."/>
            <person name="Puukko T."/>
            <person name="Paulin L."/>
            <person name="Auvinen P."/>
            <person name="Geiger D."/>
            <person name="Hedrich R."/>
            <person name="Kollist H."/>
            <person name="Kangasjaervi J."/>
        </authorList>
    </citation>
    <scope>INTERACTION WITH GHR1</scope>
    <source>
        <strain>cv. Columbia</strain>
        <strain>cv. Columbia GL1</strain>
    </source>
</reference>
<reference key="19">
    <citation type="journal article" date="2018" name="Sci. Signal.">
        <title>Coordinating the overall stomatal response of plants: Rapid leaf-to-leaf communication during light stress.</title>
        <authorList>
            <person name="Devireddy A.R."/>
            <person name="Zandalinas S.I."/>
            <person name="Gomez-Cadenas A."/>
            <person name="Blumwald E."/>
            <person name="Mittler R."/>
        </authorList>
    </citation>
    <scope>FUNCTION</scope>
</reference>
<name>SLAC1_ARATH</name>
<protein>
    <recommendedName>
        <fullName evidence="21">Guard cell S-type anion channel SLAC1</fullName>
    </recommendedName>
    <alternativeName>
        <fullName evidence="21">Protein CARBON DIOXIDE INSENSITIVE 3</fullName>
    </alternativeName>
    <alternativeName>
        <fullName evidence="18">Protein OZONE-SENSITIVE 1</fullName>
    </alternativeName>
    <alternativeName>
        <fullName evidence="20">Protein RADICAL-INDUCED CELL DEATH 3</fullName>
    </alternativeName>
    <alternativeName>
        <fullName evidence="19">Protein SLOW ANION CHANNEL-ASSOCIATED 1</fullName>
    </alternativeName>
</protein>
<accession>Q9LD83</accession>
<proteinExistence type="evidence at protein level"/>
<sequence length="556" mass="63235">MERKQSNAHSTFADINEVEDEAEQELQQQENNNNKRFSGNRGPNRGKQRPFRGFSRQVSLETGFSVLNRESRERDDKKSLPRSGRSFGGFESGGIINGGDGRKTDFSMFRTKSTLSKQKSLLPSIIRERDIENSLRTEDGETKDDSINENVSAGRYFAALRGPELDEVKDNEDILLPKEEQWPFLLRFPIGCFGICLGLSSQAVLWLALAKSPATNFLHITPLINLVVWLFSLVVLVSVSFTYILKCIFYFEAVKREYFHPVRVNFFFAPWVVCMFLAISVPPMFSPNRKYLHPAIWCVFMGPYFFLELKIYGQWLSGGKRRLCKVANPSSHLSVVGNFVGAILASKVGWDEVAKFLWAVGFAHYLVVFVTLYQRLPTSEALPKELHPVYSMFIAAPSAASIAWNTIYGQFDGCSRTCFFIALFLYISLVARINFFTGFKFSVAWWSYTFPMTTASVATIKYAEAVPGYPSRALALTLSFISTAMVCVLFVSTLLHAFVWQTLFPNDLAIAITKRKLTREKKPFKRAYDLKRWTKQALAKKISAEKDFEAEEESHH</sequence>
<keyword id="KW-0002">3D-structure</keyword>
<keyword id="KW-0938">Abscisic acid signaling pathway</keyword>
<keyword id="KW-1003">Cell membrane</keyword>
<keyword id="KW-0175">Coiled coil</keyword>
<keyword id="KW-0406">Ion transport</keyword>
<keyword id="KW-0472">Membrane</keyword>
<keyword id="KW-0597">Phosphoprotein</keyword>
<keyword id="KW-1185">Reference proteome</keyword>
<keyword id="KW-0812">Transmembrane</keyword>
<keyword id="KW-1133">Transmembrane helix</keyword>
<keyword id="KW-0813">Transport</keyword>
<comment type="function">
    <text evidence="3 4 5 6 7 8 9 12 14 17">Slow, weak voltage-dependent S-type anion efflux channel involved in maintenance of anion homeostasis. Cl(-) efflux through SLAC1 causes membrane depolarization, which activates outward-rectifying K1 channels, leading to KCl and water efflux to reduce turgor further and cause stomatal closure, that reduces water loss and promotes leaf turgor. Essential for stomatal closure in response to CO(2), abscisic acid (ABA), ozone O(3), light/dark transitions, humidity change, calcium ions, hydrogen peroxide H(2)O(2), reactive oxygen species (ROS), and nitric oxide. Binds to the highly selective inward-rectifying potassium channels KAT1 and AKT2, and inhibits their activities. Functions as an essential negative regulator of inward potassium channels in guard cells. Essential for the efficient stomatal closure and opening in guard cells (PubMed:27002025). Involved in the local and/or systemic stomatal responses (e.g. stomatal closure) to light stress (PubMed:29463779).</text>
</comment>
<comment type="activity regulation">
    <text evidence="11 13">Activated by GHR1-mediated phosphorylation which is negatively regulated by ABI2 but not ABI1 (PubMed:22730405). Activation by SRK2E/OST1 and GHR1 is repressed by HT1 (PubMed:27694184).</text>
</comment>
<comment type="subunit">
    <text evidence="6 7 10 11 12 15 16">Homotrimer. Interacts with SRK2E, CPK6, CPK21, CPK23 and PP2CA. The channel is inactivated upon PP2CA and ABI1 binding. Interacts with KAT1, KAT2, KAT3/KC1 and AKT2 (PubMed:27002025). Interacts with GHR1 (PubMed:22730405, PubMed:30361234).</text>
</comment>
<comment type="interaction">
    <interactant intactId="EBI-11174918">
        <id>Q9LD83</id>
    </interactant>
    <interactant intactId="EBI-8519603">
        <id>Q9ZSA2</id>
        <label>CPK21</label>
    </interactant>
    <organismsDiffer>false</organismsDiffer>
    <experiments>2</experiments>
</comment>
<comment type="interaction">
    <interactant intactId="EBI-11174918">
        <id>Q9LD83</id>
    </interactant>
    <interactant intactId="EBI-15847592">
        <id>Q9M101</id>
        <label>CPK23</label>
    </interactant>
    <organismsDiffer>false</organismsDiffer>
    <experiments>4</experiments>
</comment>
<comment type="interaction">
    <interactant intactId="EBI-11174918">
        <id>Q9LD83</id>
    </interactant>
    <interactant intactId="EBI-782514">
        <id>Q940H6</id>
        <label>SRK2E</label>
    </interactant>
    <organismsDiffer>false</organismsDiffer>
    <experiments>8</experiments>
</comment>
<comment type="subcellular location">
    <subcellularLocation>
        <location evidence="4 5 6 7">Cell membrane</location>
        <topology evidence="4 5 6 7">Multi-pass membrane protein</topology>
    </subcellularLocation>
</comment>
<comment type="tissue specificity">
    <text evidence="4 5 6">Preferentially expressed in guard cells. Also detected in the vascular strands close to the leaf margins.</text>
</comment>
<comment type="induction">
    <text evidence="12">By drought stress in guard cells.</text>
</comment>
<comment type="PTM">
    <text evidence="7 8 10 11 13">Phosphorylation by SRK2E, especially on Ser-120, activates the channel. Also phosphorylated and activated by CPK21 and CPK23. Abscisic acid (ABA) promotes phosphorylation. This phosphorylation is inhibited by ABI1. Phosphorylated and activated by GHR1; this phosphorylation is repressed by ABI2 but not ABI1 (PubMed:22730405). Phosphorylated by HT1 on N-terminus but not C-terminus (PubMed:27694184).</text>
</comment>
<comment type="disruption phenotype">
    <text evidence="3 4 5 6 8 9 17">Constitutively higher stomatal conductance with over-accumulation of the osmoregulatory anions in guard cell. Impaired slow (S-type) anion channel currents that are activated by cytosolic calcium ions and abscisic acid (ABA) (normally leading to a decrease in stomatal conductance). Higher sensitivity to ozone. Increased water loss associated with a constitutive stomatal opening phenotype. Reduced circadian leaf turgor changes.</text>
</comment>
<comment type="similarity">
    <text evidence="21">Belongs to the SLAC1 S-type anion channel family.</text>
</comment>
<evidence type="ECO:0000255" key="1"/>
<evidence type="ECO:0000256" key="2">
    <source>
        <dbReference type="SAM" id="MobiDB-lite"/>
    </source>
</evidence>
<evidence type="ECO:0000269" key="3">
    <source>
    </source>
</evidence>
<evidence type="ECO:0000269" key="4">
    <source>
    </source>
</evidence>
<evidence type="ECO:0000269" key="5">
    <source>
    </source>
</evidence>
<evidence type="ECO:0000269" key="6">
    <source>
    </source>
</evidence>
<evidence type="ECO:0000269" key="7">
    <source>
    </source>
</evidence>
<evidence type="ECO:0000269" key="8">
    <source>
    </source>
</evidence>
<evidence type="ECO:0000269" key="9">
    <source>
    </source>
</evidence>
<evidence type="ECO:0000269" key="10">
    <source>
    </source>
</evidence>
<evidence type="ECO:0000269" key="11">
    <source>
    </source>
</evidence>
<evidence type="ECO:0000269" key="12">
    <source>
    </source>
</evidence>
<evidence type="ECO:0000269" key="13">
    <source>
    </source>
</evidence>
<evidence type="ECO:0000269" key="14">
    <source>
    </source>
</evidence>
<evidence type="ECO:0000269" key="15">
    <source>
    </source>
</evidence>
<evidence type="ECO:0000269" key="16">
    <source ref="11"/>
</evidence>
<evidence type="ECO:0000269" key="17">
    <source ref="4"/>
</evidence>
<evidence type="ECO:0000303" key="18">
    <source>
    </source>
</evidence>
<evidence type="ECO:0000303" key="19">
    <source>
    </source>
</evidence>
<evidence type="ECO:0000303" key="20">
    <source ref="4"/>
</evidence>
<evidence type="ECO:0000305" key="21"/>
<evidence type="ECO:0000312" key="22">
    <source>
        <dbReference type="Araport" id="AT1G12480"/>
    </source>
</evidence>
<evidence type="ECO:0000312" key="23">
    <source>
        <dbReference type="EMBL" id="AAF79652.1"/>
    </source>
</evidence>
<evidence type="ECO:0000312" key="24">
    <source>
        <dbReference type="EMBL" id="AAF88102.1"/>
    </source>
</evidence>
<evidence type="ECO:0007829" key="25">
    <source>
        <dbReference type="PDB" id="7WNQ"/>
    </source>
</evidence>
<evidence type="ECO:0007829" key="26">
    <source>
        <dbReference type="PDB" id="8J0J"/>
    </source>
</evidence>
<organism>
    <name type="scientific">Arabidopsis thaliana</name>
    <name type="common">Mouse-ear cress</name>
    <dbReference type="NCBI Taxonomy" id="3702"/>
    <lineage>
        <taxon>Eukaryota</taxon>
        <taxon>Viridiplantae</taxon>
        <taxon>Streptophyta</taxon>
        <taxon>Embryophyta</taxon>
        <taxon>Tracheophyta</taxon>
        <taxon>Spermatophyta</taxon>
        <taxon>Magnoliopsida</taxon>
        <taxon>eudicotyledons</taxon>
        <taxon>Gunneridae</taxon>
        <taxon>Pentapetalae</taxon>
        <taxon>rosids</taxon>
        <taxon>malvids</taxon>
        <taxon>Brassicales</taxon>
        <taxon>Brassicaceae</taxon>
        <taxon>Camelineae</taxon>
        <taxon>Arabidopsis</taxon>
    </lineage>
</organism>
<gene>
    <name evidence="19" type="primary">SLAC1</name>
    <name evidence="21" type="synonym">CDI3</name>
    <name evidence="18" type="synonym">OZS1</name>
    <name evidence="20" type="synonym">RCD3</name>
    <name evidence="22" type="ordered locus">At1g12480</name>
    <name evidence="23" type="ORF">F5O11.23</name>
    <name evidence="24" type="ORF">T12C24.3</name>
</gene>
<dbReference type="EMBL" id="AC025416">
    <property type="protein sequence ID" value="AAF79652.1"/>
    <property type="molecule type" value="Genomic_DNA"/>
</dbReference>
<dbReference type="EMBL" id="AC025417">
    <property type="protein sequence ID" value="AAF88102.1"/>
    <property type="molecule type" value="Genomic_DNA"/>
</dbReference>
<dbReference type="EMBL" id="CP002684">
    <property type="protein sequence ID" value="AEE28888.1"/>
    <property type="molecule type" value="Genomic_DNA"/>
</dbReference>
<dbReference type="EMBL" id="AF424557">
    <property type="protein sequence ID" value="AAL11551.1"/>
    <property type="molecule type" value="mRNA"/>
</dbReference>
<dbReference type="EMBL" id="BT002640">
    <property type="protein sequence ID" value="AAO11556.1"/>
    <property type="molecule type" value="mRNA"/>
</dbReference>
<dbReference type="RefSeq" id="NP_563909.1">
    <property type="nucleotide sequence ID" value="NM_101120.3"/>
</dbReference>
<dbReference type="PDB" id="7WNQ">
    <property type="method" value="EM"/>
    <property type="resolution" value="2.70 A"/>
    <property type="chains" value="A/B/C=1-556"/>
</dbReference>
<dbReference type="PDB" id="8GW6">
    <property type="method" value="EM"/>
    <property type="resolution" value="3.30 A"/>
    <property type="chains" value="A/B/C=1-556"/>
</dbReference>
<dbReference type="PDB" id="8GW7">
    <property type="method" value="EM"/>
    <property type="resolution" value="3.30 A"/>
    <property type="chains" value="A/B/C=1-556"/>
</dbReference>
<dbReference type="PDB" id="8J0J">
    <property type="method" value="EM"/>
    <property type="resolution" value="2.70 A"/>
    <property type="chains" value="A/B/C=1-556"/>
</dbReference>
<dbReference type="PDB" id="8J1E">
    <property type="method" value="EM"/>
    <property type="resolution" value="3.84 A"/>
    <property type="chains" value="A/B/C=1-556"/>
</dbReference>
<dbReference type="PDBsum" id="7WNQ"/>
<dbReference type="PDBsum" id="8GW6"/>
<dbReference type="PDBsum" id="8GW7"/>
<dbReference type="PDBsum" id="8J0J"/>
<dbReference type="PDBsum" id="8J1E"/>
<dbReference type="EMDB" id="EMD-32633"/>
<dbReference type="SMR" id="Q9LD83"/>
<dbReference type="BioGRID" id="23045">
    <property type="interactions" value="6"/>
</dbReference>
<dbReference type="DIP" id="DIP-49025N"/>
<dbReference type="FunCoup" id="Q9LD83">
    <property type="interactions" value="9"/>
</dbReference>
<dbReference type="IntAct" id="Q9LD83">
    <property type="interactions" value="8"/>
</dbReference>
<dbReference type="STRING" id="3702.Q9LD83"/>
<dbReference type="TCDB" id="2.A.16.5.1">
    <property type="family name" value="the telurite-resistance/dicarboxylate transporter (tdt) family"/>
</dbReference>
<dbReference type="iPTMnet" id="Q9LD83"/>
<dbReference type="PaxDb" id="3702-AT1G12480.1"/>
<dbReference type="ProteomicsDB" id="232621"/>
<dbReference type="EnsemblPlants" id="AT1G12480.1">
    <property type="protein sequence ID" value="AT1G12480.1"/>
    <property type="gene ID" value="AT1G12480"/>
</dbReference>
<dbReference type="GeneID" id="837805"/>
<dbReference type="Gramene" id="AT1G12480.1">
    <property type="protein sequence ID" value="AT1G12480.1"/>
    <property type="gene ID" value="AT1G12480"/>
</dbReference>
<dbReference type="KEGG" id="ath:AT1G12480"/>
<dbReference type="Araport" id="AT1G12480"/>
<dbReference type="TAIR" id="AT1G12480">
    <property type="gene designation" value="OZS1"/>
</dbReference>
<dbReference type="eggNOG" id="ENOG502QQKN">
    <property type="taxonomic scope" value="Eukaryota"/>
</dbReference>
<dbReference type="HOGENOM" id="CLU_017679_3_0_1"/>
<dbReference type="InParanoid" id="Q9LD83"/>
<dbReference type="OMA" id="GDFNMFR"/>
<dbReference type="PhylomeDB" id="Q9LD83"/>
<dbReference type="PRO" id="PR:Q9LD83"/>
<dbReference type="Proteomes" id="UP000006548">
    <property type="component" value="Chromosome 1"/>
</dbReference>
<dbReference type="ExpressionAtlas" id="Q9LD83">
    <property type="expression patterns" value="baseline and differential"/>
</dbReference>
<dbReference type="GO" id="GO:0016020">
    <property type="term" value="C:membrane"/>
    <property type="evidence" value="ECO:0000314"/>
    <property type="project" value="UniProtKB"/>
</dbReference>
<dbReference type="GO" id="GO:0005886">
    <property type="term" value="C:plasma membrane"/>
    <property type="evidence" value="ECO:0000314"/>
    <property type="project" value="TAIR"/>
</dbReference>
<dbReference type="GO" id="GO:0008509">
    <property type="term" value="F:monoatomic anion transmembrane transporter activity"/>
    <property type="evidence" value="ECO:0000314"/>
    <property type="project" value="UniProtKB"/>
</dbReference>
<dbReference type="GO" id="GO:0019901">
    <property type="term" value="F:protein kinase binding"/>
    <property type="evidence" value="ECO:0000353"/>
    <property type="project" value="UniProtKB"/>
</dbReference>
<dbReference type="GO" id="GO:0019903">
    <property type="term" value="F:protein phosphatase binding"/>
    <property type="evidence" value="ECO:0000353"/>
    <property type="project" value="UniProtKB"/>
</dbReference>
<dbReference type="GO" id="GO:0008308">
    <property type="term" value="F:voltage-gated monoatomic anion channel activity"/>
    <property type="evidence" value="ECO:0000314"/>
    <property type="project" value="UniProtKB"/>
</dbReference>
<dbReference type="GO" id="GO:0009738">
    <property type="term" value="P:abscisic acid-activated signaling pathway"/>
    <property type="evidence" value="ECO:0007669"/>
    <property type="project" value="UniProtKB-KW"/>
</dbReference>
<dbReference type="GO" id="GO:0015698">
    <property type="term" value="P:inorganic anion transport"/>
    <property type="evidence" value="ECO:0000314"/>
    <property type="project" value="UniProtKB"/>
</dbReference>
<dbReference type="GO" id="GO:0006873">
    <property type="term" value="P:intracellular monoatomic ion homeostasis"/>
    <property type="evidence" value="ECO:0000315"/>
    <property type="project" value="TAIR"/>
</dbReference>
<dbReference type="GO" id="GO:0006820">
    <property type="term" value="P:monoatomic anion transport"/>
    <property type="evidence" value="ECO:0000315"/>
    <property type="project" value="TAIR"/>
</dbReference>
<dbReference type="GO" id="GO:0050891">
    <property type="term" value="P:multicellular organismal-level water homeostasis"/>
    <property type="evidence" value="ECO:0000315"/>
    <property type="project" value="TAIR"/>
</dbReference>
<dbReference type="GO" id="GO:0015711">
    <property type="term" value="P:organic anion transport"/>
    <property type="evidence" value="ECO:0000314"/>
    <property type="project" value="UniProtKB"/>
</dbReference>
<dbReference type="GO" id="GO:0090333">
    <property type="term" value="P:regulation of stomatal closure"/>
    <property type="evidence" value="ECO:0000315"/>
    <property type="project" value="UniProtKB"/>
</dbReference>
<dbReference type="GO" id="GO:1902456">
    <property type="term" value="P:regulation of stomatal opening"/>
    <property type="evidence" value="ECO:0000315"/>
    <property type="project" value="TAIR"/>
</dbReference>
<dbReference type="GO" id="GO:0009737">
    <property type="term" value="P:response to abscisic acid"/>
    <property type="evidence" value="ECO:0000315"/>
    <property type="project" value="TAIR"/>
</dbReference>
<dbReference type="GO" id="GO:0010037">
    <property type="term" value="P:response to carbon dioxide"/>
    <property type="evidence" value="ECO:0000315"/>
    <property type="project" value="TAIR"/>
</dbReference>
<dbReference type="GO" id="GO:0009270">
    <property type="term" value="P:response to humidity"/>
    <property type="evidence" value="ECO:0000315"/>
    <property type="project" value="TAIR"/>
</dbReference>
<dbReference type="GO" id="GO:0009416">
    <property type="term" value="P:response to light stimulus"/>
    <property type="evidence" value="ECO:0000315"/>
    <property type="project" value="UniProtKB"/>
</dbReference>
<dbReference type="GO" id="GO:0010193">
    <property type="term" value="P:response to ozone"/>
    <property type="evidence" value="ECO:0000315"/>
    <property type="project" value="TAIR"/>
</dbReference>
<dbReference type="GO" id="GO:0090332">
    <property type="term" value="P:stomatal closure"/>
    <property type="evidence" value="ECO:0000315"/>
    <property type="project" value="TAIR"/>
</dbReference>
<dbReference type="GO" id="GO:0010118">
    <property type="term" value="P:stomatal movement"/>
    <property type="evidence" value="ECO:0000315"/>
    <property type="project" value="TAIR"/>
</dbReference>
<dbReference type="CDD" id="cd09323">
    <property type="entry name" value="TDT_SLAC1_like"/>
    <property type="match status" value="1"/>
</dbReference>
<dbReference type="Gene3D" id="1.50.10.150">
    <property type="entry name" value="Voltage-dependent anion channel"/>
    <property type="match status" value="1"/>
</dbReference>
<dbReference type="InterPro" id="IPR030183">
    <property type="entry name" value="SLAC/SLAH"/>
</dbReference>
<dbReference type="InterPro" id="IPR004695">
    <property type="entry name" value="SLAC1/Mae1/Ssu1/TehA"/>
</dbReference>
<dbReference type="InterPro" id="IPR038665">
    <property type="entry name" value="Voltage-dep_anion_channel_sf"/>
</dbReference>
<dbReference type="PANTHER" id="PTHR31269:SF11">
    <property type="entry name" value="GUARD CELL S-TYPE ANION CHANNEL SLAC1"/>
    <property type="match status" value="1"/>
</dbReference>
<dbReference type="PANTHER" id="PTHR31269">
    <property type="entry name" value="S-TYPE ANION CHANNEL SLAH3"/>
    <property type="match status" value="1"/>
</dbReference>
<dbReference type="Pfam" id="PF03595">
    <property type="entry name" value="SLAC1"/>
    <property type="match status" value="1"/>
</dbReference>
<feature type="chain" id="PRO_0000404259" description="Guard cell S-type anion channel SLAC1">
    <location>
        <begin position="1"/>
        <end position="556"/>
    </location>
</feature>
<feature type="topological domain" description="Cytoplasmic" evidence="21">
    <location>
        <begin position="1"/>
        <end position="189"/>
    </location>
</feature>
<feature type="transmembrane region" description="Helical" evidence="1">
    <location>
        <begin position="190"/>
        <end position="210"/>
    </location>
</feature>
<feature type="topological domain" description="Extracellular" evidence="21">
    <location>
        <begin position="211"/>
        <end position="216"/>
    </location>
</feature>
<feature type="transmembrane region" description="Helical" evidence="1">
    <location>
        <begin position="217"/>
        <end position="237"/>
    </location>
</feature>
<feature type="topological domain" description="Cytoplasmic" evidence="21">
    <location>
        <begin position="238"/>
        <end position="265"/>
    </location>
</feature>
<feature type="transmembrane region" description="Helical" evidence="1">
    <location>
        <begin position="266"/>
        <end position="286"/>
    </location>
</feature>
<feature type="topological domain" description="Extracellular" evidence="21">
    <location>
        <begin position="287"/>
        <end position="295"/>
    </location>
</feature>
<feature type="transmembrane region" description="Helical" evidence="1">
    <location>
        <begin position="296"/>
        <end position="316"/>
    </location>
</feature>
<feature type="topological domain" description="Cytoplasmic" evidence="21">
    <location>
        <begin position="317"/>
        <end position="325"/>
    </location>
</feature>
<feature type="transmembrane region" description="Helical" evidence="1">
    <location>
        <begin position="326"/>
        <end position="346"/>
    </location>
</feature>
<feature type="topological domain" description="Extracellular" evidence="21">
    <location>
        <begin position="347"/>
        <end position="352"/>
    </location>
</feature>
<feature type="transmembrane region" description="Helical" evidence="1">
    <location>
        <begin position="353"/>
        <end position="373"/>
    </location>
</feature>
<feature type="topological domain" description="Cytoplasmic" evidence="21">
    <location>
        <begin position="374"/>
        <end position="388"/>
    </location>
</feature>
<feature type="transmembrane region" description="Helical" evidence="1">
    <location>
        <begin position="389"/>
        <end position="409"/>
    </location>
</feature>
<feature type="topological domain" description="Extracellular" evidence="21">
    <location>
        <begin position="410"/>
        <end position="418"/>
    </location>
</feature>
<feature type="transmembrane region" description="Helical" evidence="1">
    <location>
        <begin position="419"/>
        <end position="439"/>
    </location>
</feature>
<feature type="topological domain" description="Cytoplasmic" evidence="21">
    <location>
        <position position="440"/>
    </location>
</feature>
<feature type="transmembrane region" description="Helical" evidence="1">
    <location>
        <begin position="441"/>
        <end position="463"/>
    </location>
</feature>
<feature type="topological domain" description="Extracellular" evidence="21">
    <location>
        <begin position="464"/>
        <end position="479"/>
    </location>
</feature>
<feature type="transmembrane region" description="Helical" evidence="1">
    <location>
        <begin position="480"/>
        <end position="500"/>
    </location>
</feature>
<feature type="topological domain" description="Cytoplasmic" evidence="21">
    <location>
        <begin position="501"/>
        <end position="556"/>
    </location>
</feature>
<feature type="region of interest" description="Disordered" evidence="2">
    <location>
        <begin position="1"/>
        <end position="103"/>
    </location>
</feature>
<feature type="coiled-coil region" evidence="1">
    <location>
        <begin position="10"/>
        <end position="36"/>
    </location>
</feature>
<feature type="compositionally biased region" description="Low complexity" evidence="2">
    <location>
        <begin position="25"/>
        <end position="34"/>
    </location>
</feature>
<feature type="compositionally biased region" description="Basic and acidic residues" evidence="2">
    <location>
        <begin position="69"/>
        <end position="79"/>
    </location>
</feature>
<feature type="compositionally biased region" description="Gly residues" evidence="2">
    <location>
        <begin position="86"/>
        <end position="99"/>
    </location>
</feature>
<feature type="site" description="Important for channel gating">
    <location>
        <position position="450"/>
    </location>
</feature>
<feature type="modified residue" description="Phosphoserine; by SRK2E" evidence="8">
    <location>
        <position position="59"/>
    </location>
</feature>
<feature type="modified residue" description="Phosphoserine; by SRK2E" evidence="8">
    <location>
        <position position="86"/>
    </location>
</feature>
<feature type="modified residue" description="Phosphoserine; by SRK2E" evidence="8">
    <location>
        <position position="113"/>
    </location>
</feature>
<feature type="modified residue" description="Phosphoserine; by SRK2E" evidence="8">
    <location>
        <position position="120"/>
    </location>
</feature>
<feature type="modified residue" description="Phosphoserine" evidence="8">
    <location>
        <position position="146"/>
    </location>
</feature>
<feature type="mutagenesis site" description="In slac1-6; normal ozone-triggered rapid transient decrease (RTD) in stomatal conductance.">
    <original>S</original>
    <variation>F</variation>
    <location>
        <position position="38"/>
    </location>
</feature>
<feature type="mutagenesis site" description="In slac1-7; impaired ozonetriggered rapid transient decrease (RTD) in stomatal conductance." evidence="8">
    <original>S</original>
    <variation>F</variation>
    <location>
        <position position="120"/>
    </location>
</feature>
<feature type="mutagenesis site" description="In slac1-8; impaired ozone-triggered rapid transient decrease (RTD) in stomatal conductance." evidence="8">
    <original>S</original>
    <variation>F</variation>
    <location>
        <position position="146"/>
    </location>
</feature>
<feature type="mutagenesis site" description="In slac1-2; impaired anion transport activity, strong insensitivity to abscisic acid (ABA), altered CO(2)-dependent leaf temperature change and stomatal closure, reduced sensitivity to darkness, and defective regulation of transpiration in response to drought stress. Impaired anion transport activity; when associated with A-450." evidence="4 6 16">
    <original>G</original>
    <variation>D</variation>
    <location>
        <position position="194"/>
    </location>
</feature>
<feature type="mutagenesis site" description="Enhanced and constitutive anion transport activity. Impaired anion transport activity; when associated with D-194." evidence="16">
    <original>F</original>
    <variation>A</variation>
    <location>
        <position position="450"/>
    </location>
</feature>
<feature type="mutagenesis site" description="Enhanced and constitutive anion transport activity." evidence="16">
    <original>F</original>
    <variation>G</variation>
    <variation>T</variation>
    <location>
        <position position="450"/>
    </location>
</feature>
<feature type="mutagenesis site" description="Impaired anion transport activity." evidence="16">
    <original>F</original>
    <variation>L</variation>
    <variation>V</variation>
    <location>
        <position position="450"/>
    </location>
</feature>
<feature type="mutagenesis site" description="In slac1-1; reduced slow (S-type) anion channel currents, and increased water loss due to impaired stomatal closure." evidence="5 16">
    <original>S</original>
    <variation>F</variation>
    <location>
        <position position="456"/>
    </location>
</feature>
<feature type="strand" evidence="26">
    <location>
        <begin position="108"/>
        <end position="110"/>
    </location>
</feature>
<feature type="helix" evidence="25">
    <location>
        <begin position="153"/>
        <end position="159"/>
    </location>
</feature>
<feature type="turn" evidence="25">
    <location>
        <begin position="162"/>
        <end position="165"/>
    </location>
</feature>
<feature type="strand" evidence="25">
    <location>
        <begin position="174"/>
        <end position="176"/>
    </location>
</feature>
<feature type="strand" evidence="25">
    <location>
        <begin position="178"/>
        <end position="180"/>
    </location>
</feature>
<feature type="helix" evidence="25">
    <location>
        <begin position="184"/>
        <end position="186"/>
    </location>
</feature>
<feature type="helix" evidence="25">
    <location>
        <begin position="191"/>
        <end position="193"/>
    </location>
</feature>
<feature type="helix" evidence="25">
    <location>
        <begin position="194"/>
        <end position="200"/>
    </location>
</feature>
<feature type="helix" evidence="25">
    <location>
        <begin position="202"/>
        <end position="208"/>
    </location>
</feature>
<feature type="helix" evidence="25">
    <location>
        <begin position="213"/>
        <end position="218"/>
    </location>
</feature>
<feature type="helix" evidence="25">
    <location>
        <begin position="223"/>
        <end position="249"/>
    </location>
</feature>
<feature type="helix" evidence="25">
    <location>
        <begin position="251"/>
        <end position="258"/>
    </location>
</feature>
<feature type="turn" evidence="25">
    <location>
        <begin position="261"/>
        <end position="266"/>
    </location>
</feature>
<feature type="helix" evidence="25">
    <location>
        <begin position="269"/>
        <end position="276"/>
    </location>
</feature>
<feature type="turn" evidence="25">
    <location>
        <begin position="277"/>
        <end position="280"/>
    </location>
</feature>
<feature type="turn" evidence="25">
    <location>
        <begin position="283"/>
        <end position="285"/>
    </location>
</feature>
<feature type="strand" evidence="26">
    <location>
        <begin position="288"/>
        <end position="291"/>
    </location>
</feature>
<feature type="helix" evidence="25">
    <location>
        <begin position="294"/>
        <end position="300"/>
    </location>
</feature>
<feature type="helix" evidence="25">
    <location>
        <begin position="302"/>
        <end position="316"/>
    </location>
</feature>
<feature type="strand" evidence="25">
    <location>
        <begin position="317"/>
        <end position="322"/>
    </location>
</feature>
<feature type="helix" evidence="25">
    <location>
        <begin position="323"/>
        <end position="325"/>
    </location>
</feature>
<feature type="helix" evidence="25">
    <location>
        <begin position="329"/>
        <end position="334"/>
    </location>
</feature>
<feature type="helix" evidence="25">
    <location>
        <begin position="337"/>
        <end position="346"/>
    </location>
</feature>
<feature type="turn" evidence="25">
    <location>
        <begin position="347"/>
        <end position="349"/>
    </location>
</feature>
<feature type="helix" evidence="25">
    <location>
        <begin position="351"/>
        <end position="371"/>
    </location>
</feature>
<feature type="strand" evidence="25">
    <location>
        <begin position="380"/>
        <end position="382"/>
    </location>
</feature>
<feature type="helix" evidence="25">
    <location>
        <begin position="388"/>
        <end position="391"/>
    </location>
</feature>
<feature type="helix" evidence="25">
    <location>
        <begin position="392"/>
        <end position="408"/>
    </location>
</feature>
<feature type="helix" evidence="25">
    <location>
        <begin position="413"/>
        <end position="430"/>
    </location>
</feature>
<feature type="strand" evidence="25">
    <location>
        <begin position="431"/>
        <end position="433"/>
    </location>
</feature>
<feature type="helix" evidence="25">
    <location>
        <begin position="434"/>
        <end position="437"/>
    </location>
</feature>
<feature type="helix" evidence="25">
    <location>
        <begin position="443"/>
        <end position="448"/>
    </location>
</feature>
<feature type="helix" evidence="25">
    <location>
        <begin position="450"/>
        <end position="465"/>
    </location>
</feature>
<feature type="helix" evidence="25">
    <location>
        <begin position="469"/>
        <end position="498"/>
    </location>
</feature>
<feature type="helix" evidence="25">
    <location>
        <begin position="508"/>
        <end position="510"/>
    </location>
</feature>